<sequence length="606" mass="67998">MNIEEKLTTSIISAIKTLYGQDVPGKMVQLQKTKKEFEGHLTLVVFPFLKMSKKGPEQTAQEIGGYLKEHAPELVSAYNAVKGFLNLTIASDCWIELLNSIQAAPEYGIEKATENSPLVMIEYSSPNTNKPLHLGHVRNNLLGNALANVMAANGNKVVKTNIVNDRGIHICKSMLAWLKYGNGETPESSGKKGDHLIGDYYVAFDKHYKAEVKELTAQYQAEGLNEEEAKAKAEANSPLMLEAREMLRKWEANDPEIRALWKKMNDWVYAGFDETYKMMGVSFDKIYYESNTYLEGKEKVMEGLEKGFFYRKEDNSVWADLTAEGLDHKLLLRGDGTSVYMTQDIGTAKLRFQDYPINKMIYVVGNEQNYHFQVLSILLDKLGFEWGKGLVHFSYGMVELPEGKMKSREGTVVDADDLMEAMIETAKETSAELGKLDGLTQEEADNIARIVGLGALKYFILKVDARKNMTFNPKESIDFNGNTGPFIQYTYARIQSVLRKAAEAGIVIPEIIPAGLELSAKEEGLIQMLADFKSVVKQAGSDYNPSIIANYAYDLVKEYNQFYHDFSILREENEALKVFRLALSANVGKIVKTAMGLLGIEVPERM</sequence>
<protein>
    <recommendedName>
        <fullName evidence="1">Arginine--tRNA ligase</fullName>
        <ecNumber evidence="1">6.1.1.19</ecNumber>
    </recommendedName>
    <alternativeName>
        <fullName evidence="1">Arginyl-tRNA synthetase</fullName>
        <shortName evidence="1">ArgRS</shortName>
    </alternativeName>
</protein>
<reference key="1">
    <citation type="journal article" date="2007" name="PLoS Biol.">
        <title>Evolution of symbiotic bacteria in the distal human intestine.</title>
        <authorList>
            <person name="Xu J."/>
            <person name="Mahowald M.A."/>
            <person name="Ley R.E."/>
            <person name="Lozupone C.A."/>
            <person name="Hamady M."/>
            <person name="Martens E.C."/>
            <person name="Henrissat B."/>
            <person name="Coutinho P.M."/>
            <person name="Minx P."/>
            <person name="Latreille P."/>
            <person name="Cordum H."/>
            <person name="Van Brunt A."/>
            <person name="Kim K."/>
            <person name="Fulton R.S."/>
            <person name="Fulton L.A."/>
            <person name="Clifton S.W."/>
            <person name="Wilson R.K."/>
            <person name="Knight R.D."/>
            <person name="Gordon J.I."/>
        </authorList>
    </citation>
    <scope>NUCLEOTIDE SEQUENCE [LARGE SCALE GENOMIC DNA]</scope>
    <source>
        <strain>ATCC 8482 / DSM 1447 / JCM 5826 / CCUG 4940 / NBRC 14291 / NCTC 11154</strain>
    </source>
</reference>
<feature type="chain" id="PRO_1000017988" description="Arginine--tRNA ligase">
    <location>
        <begin position="1"/>
        <end position="606"/>
    </location>
</feature>
<feature type="short sequence motif" description="'HIGH' region">
    <location>
        <begin position="126"/>
        <end position="136"/>
    </location>
</feature>
<comment type="catalytic activity">
    <reaction evidence="1">
        <text>tRNA(Arg) + L-arginine + ATP = L-arginyl-tRNA(Arg) + AMP + diphosphate</text>
        <dbReference type="Rhea" id="RHEA:20301"/>
        <dbReference type="Rhea" id="RHEA-COMP:9658"/>
        <dbReference type="Rhea" id="RHEA-COMP:9673"/>
        <dbReference type="ChEBI" id="CHEBI:30616"/>
        <dbReference type="ChEBI" id="CHEBI:32682"/>
        <dbReference type="ChEBI" id="CHEBI:33019"/>
        <dbReference type="ChEBI" id="CHEBI:78442"/>
        <dbReference type="ChEBI" id="CHEBI:78513"/>
        <dbReference type="ChEBI" id="CHEBI:456215"/>
        <dbReference type="EC" id="6.1.1.19"/>
    </reaction>
</comment>
<comment type="subunit">
    <text evidence="1">Monomer.</text>
</comment>
<comment type="subcellular location">
    <subcellularLocation>
        <location evidence="1">Cytoplasm</location>
    </subcellularLocation>
</comment>
<comment type="similarity">
    <text evidence="1">Belongs to the class-I aminoacyl-tRNA synthetase family.</text>
</comment>
<proteinExistence type="inferred from homology"/>
<dbReference type="EC" id="6.1.1.19" evidence="1"/>
<dbReference type="EMBL" id="CP000139">
    <property type="protein sequence ID" value="ABR38772.1"/>
    <property type="molecule type" value="Genomic_DNA"/>
</dbReference>
<dbReference type="RefSeq" id="WP_005850079.1">
    <property type="nucleotide sequence ID" value="NZ_JANSWM010000108.1"/>
</dbReference>
<dbReference type="SMR" id="A6KZA8"/>
<dbReference type="STRING" id="435590.BVU_1081"/>
<dbReference type="PaxDb" id="435590-BVU_1081"/>
<dbReference type="GeneID" id="5302047"/>
<dbReference type="KEGG" id="bvu:BVU_1081"/>
<dbReference type="eggNOG" id="COG0018">
    <property type="taxonomic scope" value="Bacteria"/>
</dbReference>
<dbReference type="HOGENOM" id="CLU_006406_6_1_10"/>
<dbReference type="BioCyc" id="BVUL435590:G1G59-1127-MONOMER"/>
<dbReference type="Proteomes" id="UP000002861">
    <property type="component" value="Chromosome"/>
</dbReference>
<dbReference type="GO" id="GO:0005737">
    <property type="term" value="C:cytoplasm"/>
    <property type="evidence" value="ECO:0007669"/>
    <property type="project" value="UniProtKB-SubCell"/>
</dbReference>
<dbReference type="GO" id="GO:0004814">
    <property type="term" value="F:arginine-tRNA ligase activity"/>
    <property type="evidence" value="ECO:0007669"/>
    <property type="project" value="UniProtKB-UniRule"/>
</dbReference>
<dbReference type="GO" id="GO:0005524">
    <property type="term" value="F:ATP binding"/>
    <property type="evidence" value="ECO:0007669"/>
    <property type="project" value="UniProtKB-UniRule"/>
</dbReference>
<dbReference type="GO" id="GO:0006420">
    <property type="term" value="P:arginyl-tRNA aminoacylation"/>
    <property type="evidence" value="ECO:0007669"/>
    <property type="project" value="UniProtKB-UniRule"/>
</dbReference>
<dbReference type="FunFam" id="3.40.50.620:FF:000125">
    <property type="entry name" value="Arginine--tRNA ligase"/>
    <property type="match status" value="1"/>
</dbReference>
<dbReference type="Gene3D" id="3.30.1360.70">
    <property type="entry name" value="Arginyl tRNA synthetase N-terminal domain"/>
    <property type="match status" value="1"/>
</dbReference>
<dbReference type="Gene3D" id="3.40.50.620">
    <property type="entry name" value="HUPs"/>
    <property type="match status" value="1"/>
</dbReference>
<dbReference type="Gene3D" id="1.10.730.10">
    <property type="entry name" value="Isoleucyl-tRNA Synthetase, Domain 1"/>
    <property type="match status" value="1"/>
</dbReference>
<dbReference type="HAMAP" id="MF_00123">
    <property type="entry name" value="Arg_tRNA_synth"/>
    <property type="match status" value="1"/>
</dbReference>
<dbReference type="InterPro" id="IPR001412">
    <property type="entry name" value="aa-tRNA-synth_I_CS"/>
</dbReference>
<dbReference type="InterPro" id="IPR001278">
    <property type="entry name" value="Arg-tRNA-ligase"/>
</dbReference>
<dbReference type="InterPro" id="IPR005148">
    <property type="entry name" value="Arg-tRNA-synth_N"/>
</dbReference>
<dbReference type="InterPro" id="IPR036695">
    <property type="entry name" value="Arg-tRNA-synth_N_sf"/>
</dbReference>
<dbReference type="InterPro" id="IPR035684">
    <property type="entry name" value="ArgRS_core"/>
</dbReference>
<dbReference type="InterPro" id="IPR008909">
    <property type="entry name" value="DALR_anticod-bd"/>
</dbReference>
<dbReference type="InterPro" id="IPR014729">
    <property type="entry name" value="Rossmann-like_a/b/a_fold"/>
</dbReference>
<dbReference type="InterPro" id="IPR009080">
    <property type="entry name" value="tRNAsynth_Ia_anticodon-bd"/>
</dbReference>
<dbReference type="NCBIfam" id="TIGR00456">
    <property type="entry name" value="argS"/>
    <property type="match status" value="1"/>
</dbReference>
<dbReference type="PANTHER" id="PTHR11956:SF5">
    <property type="entry name" value="ARGININE--TRNA LIGASE, CYTOPLASMIC"/>
    <property type="match status" value="1"/>
</dbReference>
<dbReference type="PANTHER" id="PTHR11956">
    <property type="entry name" value="ARGINYL-TRNA SYNTHETASE"/>
    <property type="match status" value="1"/>
</dbReference>
<dbReference type="Pfam" id="PF03485">
    <property type="entry name" value="Arg_tRNA_synt_N"/>
    <property type="match status" value="1"/>
</dbReference>
<dbReference type="Pfam" id="PF05746">
    <property type="entry name" value="DALR_1"/>
    <property type="match status" value="1"/>
</dbReference>
<dbReference type="Pfam" id="PF00750">
    <property type="entry name" value="tRNA-synt_1d"/>
    <property type="match status" value="1"/>
</dbReference>
<dbReference type="PRINTS" id="PR01038">
    <property type="entry name" value="TRNASYNTHARG"/>
</dbReference>
<dbReference type="SMART" id="SM01016">
    <property type="entry name" value="Arg_tRNA_synt_N"/>
    <property type="match status" value="1"/>
</dbReference>
<dbReference type="SMART" id="SM00836">
    <property type="entry name" value="DALR_1"/>
    <property type="match status" value="1"/>
</dbReference>
<dbReference type="SUPFAM" id="SSF47323">
    <property type="entry name" value="Anticodon-binding domain of a subclass of class I aminoacyl-tRNA synthetases"/>
    <property type="match status" value="1"/>
</dbReference>
<dbReference type="SUPFAM" id="SSF55190">
    <property type="entry name" value="Arginyl-tRNA synthetase (ArgRS), N-terminal 'additional' domain"/>
    <property type="match status" value="1"/>
</dbReference>
<dbReference type="SUPFAM" id="SSF52374">
    <property type="entry name" value="Nucleotidylyl transferase"/>
    <property type="match status" value="1"/>
</dbReference>
<dbReference type="PROSITE" id="PS00178">
    <property type="entry name" value="AA_TRNA_LIGASE_I"/>
    <property type="match status" value="1"/>
</dbReference>
<keyword id="KW-0030">Aminoacyl-tRNA synthetase</keyword>
<keyword id="KW-0067">ATP-binding</keyword>
<keyword id="KW-0963">Cytoplasm</keyword>
<keyword id="KW-0436">Ligase</keyword>
<keyword id="KW-0547">Nucleotide-binding</keyword>
<keyword id="KW-0648">Protein biosynthesis</keyword>
<evidence type="ECO:0000255" key="1">
    <source>
        <dbReference type="HAMAP-Rule" id="MF_00123"/>
    </source>
</evidence>
<name>SYR_PHOV8</name>
<gene>
    <name evidence="1" type="primary">argS</name>
    <name type="ordered locus">BVU_1081</name>
</gene>
<accession>A6KZA8</accession>
<organism>
    <name type="scientific">Phocaeicola vulgatus (strain ATCC 8482 / DSM 1447 / JCM 5826 / CCUG 4940 / NBRC 14291 / NCTC 11154)</name>
    <name type="common">Bacteroides vulgatus</name>
    <dbReference type="NCBI Taxonomy" id="435590"/>
    <lineage>
        <taxon>Bacteria</taxon>
        <taxon>Pseudomonadati</taxon>
        <taxon>Bacteroidota</taxon>
        <taxon>Bacteroidia</taxon>
        <taxon>Bacteroidales</taxon>
        <taxon>Bacteroidaceae</taxon>
        <taxon>Phocaeicola</taxon>
    </lineage>
</organism>